<keyword id="KW-0963">Cytoplasm</keyword>
<keyword id="KW-0378">Hydrolase</keyword>
<keyword id="KW-0479">Metal-binding</keyword>
<keyword id="KW-0533">Nickel</keyword>
<keyword id="KW-1185">Reference proteome</keyword>
<name>URE1_ECO57</name>
<sequence>MSNISRQAYADMFGPTTGDKIRLADTELWIEVEDDLTTYGEEVKFGGGKVIRDGMGQGQMLSAGCADLVLTNALIIDYWGIVKADIGVKDGRIFAIGKAGNPDIQPNVTIPIGVSTEIIAAEGRIVTAGGVDTHIHWICPQQAEEALTSGITTMIGGGTGPTAGSNATTCTPGPWYIYQMLQAADSLPVNIGLLGKGNCSNPDALREQVAAGVIGLKIHEDWGATPAVINCALTVADEMDVQVALHSDTLNESGFVEDTLTAIGGRTIHTFHTEGAGGGHAPDIITACAHPNILPSSTNPTLPYTVNTIDEHLDMLMVCHHLDPDIAEDVAFAESRIRQETIAAEDVLHDLGAFSLTSSDSQAMGRVGEVVLRTWQVAHRMKVQRGPLPEESGDNDNVRVKRYIAKYTINPALTHGIAHEVGSIEVGKLADLVLWSPAFFGVKPATIVKGGMIAMAPMGDINGSIPTPQPVHYRPMFAALGSARHRCRVTFLSQAAAANGVAEQLNLHSTTAVVKGCRTVQKADMRHNSLLPDITVDSQTYEVRINGELITSEPADILPMAQRYFLF</sequence>
<dbReference type="EC" id="3.5.1.5" evidence="1"/>
<dbReference type="EMBL" id="AE005174">
    <property type="protein sequence ID" value="AAG55290.1"/>
    <property type="status" value="ALT_INIT"/>
    <property type="molecule type" value="Genomic_DNA"/>
</dbReference>
<dbReference type="EMBL" id="AE005174">
    <property type="protein sequence ID" value="AAG55699.1"/>
    <property type="status" value="ALT_INIT"/>
    <property type="molecule type" value="Genomic_DNA"/>
</dbReference>
<dbReference type="EMBL" id="BA000007">
    <property type="protein sequence ID" value="BAB34747.2"/>
    <property type="molecule type" value="Genomic_DNA"/>
</dbReference>
<dbReference type="PIR" id="D90794">
    <property type="entry name" value="D90794"/>
</dbReference>
<dbReference type="PIR" id="G85654">
    <property type="entry name" value="G85654"/>
</dbReference>
<dbReference type="RefSeq" id="NP_309351.1">
    <property type="nucleotide sequence ID" value="NC_002695.1"/>
</dbReference>
<dbReference type="SMR" id="Q8XAG0"/>
<dbReference type="STRING" id="155864.Z1145"/>
<dbReference type="MEROPS" id="M38.982"/>
<dbReference type="KEGG" id="ece:Z1145"/>
<dbReference type="KEGG" id="ece:Z1584"/>
<dbReference type="KEGG" id="ecs:ECs_1324"/>
<dbReference type="PATRIC" id="fig|386585.9.peg.1429"/>
<dbReference type="eggNOG" id="COG0804">
    <property type="taxonomic scope" value="Bacteria"/>
</dbReference>
<dbReference type="HOGENOM" id="CLU_000980_0_0_6"/>
<dbReference type="OMA" id="DTMDGVH"/>
<dbReference type="UniPathway" id="UPA00258">
    <property type="reaction ID" value="UER00370"/>
</dbReference>
<dbReference type="Proteomes" id="UP000000558">
    <property type="component" value="Chromosome"/>
</dbReference>
<dbReference type="Proteomes" id="UP000002519">
    <property type="component" value="Chromosome"/>
</dbReference>
<dbReference type="GO" id="GO:0005737">
    <property type="term" value="C:cytoplasm"/>
    <property type="evidence" value="ECO:0007669"/>
    <property type="project" value="UniProtKB-SubCell"/>
</dbReference>
<dbReference type="GO" id="GO:0016151">
    <property type="term" value="F:nickel cation binding"/>
    <property type="evidence" value="ECO:0007669"/>
    <property type="project" value="UniProtKB-UniRule"/>
</dbReference>
<dbReference type="GO" id="GO:0009039">
    <property type="term" value="F:urease activity"/>
    <property type="evidence" value="ECO:0007669"/>
    <property type="project" value="UniProtKB-UniRule"/>
</dbReference>
<dbReference type="GO" id="GO:0043419">
    <property type="term" value="P:urea catabolic process"/>
    <property type="evidence" value="ECO:0007669"/>
    <property type="project" value="UniProtKB-UniRule"/>
</dbReference>
<dbReference type="CDD" id="cd00375">
    <property type="entry name" value="Urease_alpha"/>
    <property type="match status" value="1"/>
</dbReference>
<dbReference type="Gene3D" id="3.20.20.140">
    <property type="entry name" value="Metal-dependent hydrolases"/>
    <property type="match status" value="1"/>
</dbReference>
<dbReference type="Gene3D" id="2.30.40.10">
    <property type="entry name" value="Urease, subunit C, domain 1"/>
    <property type="match status" value="1"/>
</dbReference>
<dbReference type="HAMAP" id="MF_01953">
    <property type="entry name" value="Urease_alpha"/>
    <property type="match status" value="1"/>
</dbReference>
<dbReference type="InterPro" id="IPR006680">
    <property type="entry name" value="Amidohydro-rel"/>
</dbReference>
<dbReference type="InterPro" id="IPR011059">
    <property type="entry name" value="Metal-dep_hydrolase_composite"/>
</dbReference>
<dbReference type="InterPro" id="IPR032466">
    <property type="entry name" value="Metal_Hydrolase"/>
</dbReference>
<dbReference type="InterPro" id="IPR011612">
    <property type="entry name" value="Urease_alpha_N_dom"/>
</dbReference>
<dbReference type="InterPro" id="IPR050112">
    <property type="entry name" value="Urease_alpha_subunit"/>
</dbReference>
<dbReference type="InterPro" id="IPR017950">
    <property type="entry name" value="Urease_AS"/>
</dbReference>
<dbReference type="InterPro" id="IPR005848">
    <property type="entry name" value="Urease_asu"/>
</dbReference>
<dbReference type="InterPro" id="IPR017951">
    <property type="entry name" value="Urease_asu_c"/>
</dbReference>
<dbReference type="InterPro" id="IPR029754">
    <property type="entry name" value="Urease_Ni-bd"/>
</dbReference>
<dbReference type="NCBIfam" id="NF009685">
    <property type="entry name" value="PRK13206.1"/>
    <property type="match status" value="1"/>
</dbReference>
<dbReference type="NCBIfam" id="NF009686">
    <property type="entry name" value="PRK13207.1"/>
    <property type="match status" value="1"/>
</dbReference>
<dbReference type="NCBIfam" id="TIGR01792">
    <property type="entry name" value="urease_alph"/>
    <property type="match status" value="1"/>
</dbReference>
<dbReference type="PANTHER" id="PTHR43440">
    <property type="entry name" value="UREASE"/>
    <property type="match status" value="1"/>
</dbReference>
<dbReference type="PANTHER" id="PTHR43440:SF1">
    <property type="entry name" value="UREASE"/>
    <property type="match status" value="1"/>
</dbReference>
<dbReference type="Pfam" id="PF01979">
    <property type="entry name" value="Amidohydro_1"/>
    <property type="match status" value="1"/>
</dbReference>
<dbReference type="Pfam" id="PF00449">
    <property type="entry name" value="Urease_alpha"/>
    <property type="match status" value="1"/>
</dbReference>
<dbReference type="PRINTS" id="PR01752">
    <property type="entry name" value="UREASE"/>
</dbReference>
<dbReference type="SUPFAM" id="SSF51338">
    <property type="entry name" value="Composite domain of metallo-dependent hydrolases"/>
    <property type="match status" value="2"/>
</dbReference>
<dbReference type="SUPFAM" id="SSF51556">
    <property type="entry name" value="Metallo-dependent hydrolases"/>
    <property type="match status" value="1"/>
</dbReference>
<dbReference type="PROSITE" id="PS01120">
    <property type="entry name" value="UREASE_1"/>
    <property type="match status" value="1"/>
</dbReference>
<dbReference type="PROSITE" id="PS00145">
    <property type="entry name" value="UREASE_2"/>
    <property type="match status" value="1"/>
</dbReference>
<dbReference type="PROSITE" id="PS51368">
    <property type="entry name" value="UREASE_3"/>
    <property type="match status" value="1"/>
</dbReference>
<comment type="catalytic activity">
    <reaction evidence="1">
        <text>urea + 2 H2O + H(+) = hydrogencarbonate + 2 NH4(+)</text>
        <dbReference type="Rhea" id="RHEA:20557"/>
        <dbReference type="ChEBI" id="CHEBI:15377"/>
        <dbReference type="ChEBI" id="CHEBI:15378"/>
        <dbReference type="ChEBI" id="CHEBI:16199"/>
        <dbReference type="ChEBI" id="CHEBI:17544"/>
        <dbReference type="ChEBI" id="CHEBI:28938"/>
        <dbReference type="EC" id="3.5.1.5"/>
    </reaction>
</comment>
<comment type="cofactor">
    <cofactor evidence="1">
        <name>Ni cation</name>
        <dbReference type="ChEBI" id="CHEBI:25516"/>
    </cofactor>
    <text evidence="1">Binds 2 nickel ions per subunit.</text>
</comment>
<comment type="pathway">
    <text evidence="1">Nitrogen metabolism; urea degradation; CO(2) and NH(3) from urea (urease route): step 1/1.</text>
</comment>
<comment type="subunit">
    <text evidence="1">Heterotrimer of UreA (gamma), UreB (beta) and UreC (alpha) subunits. Three heterotrimers associate to form the active enzyme.</text>
</comment>
<comment type="subcellular location">
    <subcellularLocation>
        <location evidence="1">Cytoplasm</location>
    </subcellularLocation>
</comment>
<comment type="PTM">
    <text evidence="1">Carboxylation allows a single lysine to coordinate two nickel ions.</text>
</comment>
<comment type="similarity">
    <text evidence="1">Belongs to the metallo-dependent hydrolases superfamily. Urease alpha subunit family.</text>
</comment>
<comment type="caution">
    <text evidence="2">Neither O157 strain expresses urease due to a truncation of ureD, the last gene of the probable operon. Urease activity is restored in O157 / Sakai upon complementation with wild-type ureD.</text>
</comment>
<comment type="caution">
    <text evidence="2">This region of the chromosome is duplicated in strain O157:H7 / EDL933 but not in O157:H7 / Sakai.</text>
</comment>
<comment type="sequence caution" evidence="2">
    <conflict type="erroneous initiation">
        <sequence resource="EMBL-CDS" id="AAG55290"/>
    </conflict>
    <text>Extended N-terminus.</text>
</comment>
<comment type="sequence caution" evidence="2">
    <conflict type="erroneous initiation">
        <sequence resource="EMBL-CDS" id="AAG55699"/>
    </conflict>
    <text>Extended N-terminus.</text>
</comment>
<organism>
    <name type="scientific">Escherichia coli O157:H7</name>
    <dbReference type="NCBI Taxonomy" id="83334"/>
    <lineage>
        <taxon>Bacteria</taxon>
        <taxon>Pseudomonadati</taxon>
        <taxon>Pseudomonadota</taxon>
        <taxon>Gammaproteobacteria</taxon>
        <taxon>Enterobacterales</taxon>
        <taxon>Enterobacteriaceae</taxon>
        <taxon>Escherichia</taxon>
    </lineage>
</organism>
<accession>Q8XAG0</accession>
<accession>Q7AFH5</accession>
<gene>
    <name evidence="1" type="primary">ureC1</name>
    <name type="ordered locus">Z1145</name>
    <name type="ordered locus">ECs1324</name>
</gene>
<gene>
    <name evidence="1" type="primary">ureC2</name>
    <name type="ordered locus">Z1584</name>
</gene>
<evidence type="ECO:0000255" key="1">
    <source>
        <dbReference type="HAMAP-Rule" id="MF_01953"/>
    </source>
</evidence>
<evidence type="ECO:0000305" key="2"/>
<feature type="chain" id="PRO_0000234155" description="Urease subunit alpha">
    <location>
        <begin position="1"/>
        <end position="567"/>
    </location>
</feature>
<feature type="domain" description="Urease" evidence="1">
    <location>
        <begin position="129"/>
        <end position="567"/>
    </location>
</feature>
<feature type="active site" description="Proton donor" evidence="1">
    <location>
        <position position="320"/>
    </location>
</feature>
<feature type="binding site" evidence="1">
    <location>
        <position position="134"/>
    </location>
    <ligand>
        <name>Ni(2+)</name>
        <dbReference type="ChEBI" id="CHEBI:49786"/>
        <label>1</label>
    </ligand>
</feature>
<feature type="binding site" evidence="1">
    <location>
        <position position="136"/>
    </location>
    <ligand>
        <name>Ni(2+)</name>
        <dbReference type="ChEBI" id="CHEBI:49786"/>
        <label>1</label>
    </ligand>
</feature>
<feature type="binding site" description="via carbamate group" evidence="1">
    <location>
        <position position="217"/>
    </location>
    <ligand>
        <name>Ni(2+)</name>
        <dbReference type="ChEBI" id="CHEBI:49786"/>
        <label>1</label>
    </ligand>
</feature>
<feature type="binding site" description="via carbamate group" evidence="1">
    <location>
        <position position="217"/>
    </location>
    <ligand>
        <name>Ni(2+)</name>
        <dbReference type="ChEBI" id="CHEBI:49786"/>
        <label>2</label>
    </ligand>
</feature>
<feature type="binding site" evidence="1">
    <location>
        <position position="219"/>
    </location>
    <ligand>
        <name>substrate</name>
    </ligand>
</feature>
<feature type="binding site" evidence="1">
    <location>
        <position position="246"/>
    </location>
    <ligand>
        <name>Ni(2+)</name>
        <dbReference type="ChEBI" id="CHEBI:49786"/>
        <label>2</label>
    </ligand>
</feature>
<feature type="binding site" evidence="1">
    <location>
        <position position="272"/>
    </location>
    <ligand>
        <name>Ni(2+)</name>
        <dbReference type="ChEBI" id="CHEBI:49786"/>
        <label>2</label>
    </ligand>
</feature>
<feature type="binding site" evidence="1">
    <location>
        <position position="360"/>
    </location>
    <ligand>
        <name>Ni(2+)</name>
        <dbReference type="ChEBI" id="CHEBI:49786"/>
        <label>1</label>
    </ligand>
</feature>
<feature type="modified residue" description="N6-carboxylysine" evidence="1">
    <location>
        <position position="217"/>
    </location>
</feature>
<protein>
    <recommendedName>
        <fullName evidence="1">Urease subunit alpha</fullName>
        <ecNumber evidence="1">3.5.1.5</ecNumber>
    </recommendedName>
    <alternativeName>
        <fullName evidence="1">Urea amidohydrolase subunit alpha</fullName>
    </alternativeName>
</protein>
<reference key="1">
    <citation type="journal article" date="2001" name="Nature">
        <title>Genome sequence of enterohaemorrhagic Escherichia coli O157:H7.</title>
        <authorList>
            <person name="Perna N.T."/>
            <person name="Plunkett G. III"/>
            <person name="Burland V."/>
            <person name="Mau B."/>
            <person name="Glasner J.D."/>
            <person name="Rose D.J."/>
            <person name="Mayhew G.F."/>
            <person name="Evans P.S."/>
            <person name="Gregor J."/>
            <person name="Kirkpatrick H.A."/>
            <person name="Posfai G."/>
            <person name="Hackett J."/>
            <person name="Klink S."/>
            <person name="Boutin A."/>
            <person name="Shao Y."/>
            <person name="Miller L."/>
            <person name="Grotbeck E.J."/>
            <person name="Davis N.W."/>
            <person name="Lim A."/>
            <person name="Dimalanta E.T."/>
            <person name="Potamousis K."/>
            <person name="Apodaca J."/>
            <person name="Anantharaman T.S."/>
            <person name="Lin J."/>
            <person name="Yen G."/>
            <person name="Schwartz D.C."/>
            <person name="Welch R.A."/>
            <person name="Blattner F.R."/>
        </authorList>
    </citation>
    <scope>NUCLEOTIDE SEQUENCE [LARGE SCALE GENOMIC DNA]</scope>
    <source>
        <strain>O157:H7 / EDL933 / ATCC 700927 / EHEC</strain>
    </source>
</reference>
<reference key="2">
    <citation type="journal article" date="2001" name="DNA Res.">
        <title>Complete genome sequence of enterohemorrhagic Escherichia coli O157:H7 and genomic comparison with a laboratory strain K-12.</title>
        <authorList>
            <person name="Hayashi T."/>
            <person name="Makino K."/>
            <person name="Ohnishi M."/>
            <person name="Kurokawa K."/>
            <person name="Ishii K."/>
            <person name="Yokoyama K."/>
            <person name="Han C.-G."/>
            <person name="Ohtsubo E."/>
            <person name="Nakayama K."/>
            <person name="Murata T."/>
            <person name="Tanaka M."/>
            <person name="Tobe T."/>
            <person name="Iida T."/>
            <person name="Takami H."/>
            <person name="Honda T."/>
            <person name="Sasakawa C."/>
            <person name="Ogasawara N."/>
            <person name="Yasunaga T."/>
            <person name="Kuhara S."/>
            <person name="Shiba T."/>
            <person name="Hattori M."/>
            <person name="Shinagawa H."/>
        </authorList>
    </citation>
    <scope>NUCLEOTIDE SEQUENCE [LARGE SCALE GENOMIC DNA]</scope>
    <source>
        <strain>O157:H7 / Sakai / RIMD 0509952 / EHEC</strain>
    </source>
</reference>
<reference key="3">
    <citation type="journal article" date="2004" name="Microbiology">
        <title>Urease activity of enterohaemorrhagic Escherichia coli depends on a specific one-base substitution in ureD.</title>
        <authorList>
            <person name="Nakano M."/>
            <person name="Iida T."/>
            <person name="Honda T."/>
        </authorList>
    </citation>
    <scope>ABSENCE OF UREASE</scope>
    <source>
        <strain>O157:H7 / Sakai / RIMD 0509952 / EHEC</strain>
    </source>
</reference>
<proteinExistence type="inferred from homology"/>